<accession>Q2N9C6</accession>
<gene>
    <name evidence="1" type="primary">rplF</name>
    <name type="ordered locus">ELI_08115</name>
</gene>
<evidence type="ECO:0000255" key="1">
    <source>
        <dbReference type="HAMAP-Rule" id="MF_01365"/>
    </source>
</evidence>
<evidence type="ECO:0000305" key="2"/>
<sequence>MSRIGKRAVAIPSGVEAKIDNGTLTVKGPKGTLSLGLSDLIDYKIEGDEIAVNPANDTQKARSYWGMQRTLVSNLVEGVTEGFSKTLEISGVGYRAQAQGKTLKLQLGYSHDVDIAVPEGLEVKTPDQTTVIISGIDKQAVGQLAAEIRQWRKPEPYKGKGIKYQGEYVFRKEGKKK</sequence>
<proteinExistence type="inferred from homology"/>
<dbReference type="EMBL" id="CP000157">
    <property type="protein sequence ID" value="ABC63715.1"/>
    <property type="molecule type" value="Genomic_DNA"/>
</dbReference>
<dbReference type="RefSeq" id="WP_011414547.1">
    <property type="nucleotide sequence ID" value="NC_007722.1"/>
</dbReference>
<dbReference type="SMR" id="Q2N9C6"/>
<dbReference type="STRING" id="314225.ELI_08115"/>
<dbReference type="KEGG" id="eli:ELI_08115"/>
<dbReference type="eggNOG" id="COG0097">
    <property type="taxonomic scope" value="Bacteria"/>
</dbReference>
<dbReference type="HOGENOM" id="CLU_065464_1_2_5"/>
<dbReference type="OrthoDB" id="9805007at2"/>
<dbReference type="Proteomes" id="UP000008808">
    <property type="component" value="Chromosome"/>
</dbReference>
<dbReference type="GO" id="GO:0022625">
    <property type="term" value="C:cytosolic large ribosomal subunit"/>
    <property type="evidence" value="ECO:0007669"/>
    <property type="project" value="TreeGrafter"/>
</dbReference>
<dbReference type="GO" id="GO:0019843">
    <property type="term" value="F:rRNA binding"/>
    <property type="evidence" value="ECO:0007669"/>
    <property type="project" value="UniProtKB-UniRule"/>
</dbReference>
<dbReference type="GO" id="GO:0003735">
    <property type="term" value="F:structural constituent of ribosome"/>
    <property type="evidence" value="ECO:0007669"/>
    <property type="project" value="InterPro"/>
</dbReference>
<dbReference type="GO" id="GO:0002181">
    <property type="term" value="P:cytoplasmic translation"/>
    <property type="evidence" value="ECO:0007669"/>
    <property type="project" value="TreeGrafter"/>
</dbReference>
<dbReference type="FunFam" id="3.90.930.12:FF:000001">
    <property type="entry name" value="50S ribosomal protein L6"/>
    <property type="match status" value="1"/>
</dbReference>
<dbReference type="Gene3D" id="3.90.930.12">
    <property type="entry name" value="Ribosomal protein L6, alpha-beta domain"/>
    <property type="match status" value="2"/>
</dbReference>
<dbReference type="HAMAP" id="MF_01365_B">
    <property type="entry name" value="Ribosomal_uL6_B"/>
    <property type="match status" value="1"/>
</dbReference>
<dbReference type="InterPro" id="IPR000702">
    <property type="entry name" value="Ribosomal_uL6-like"/>
</dbReference>
<dbReference type="InterPro" id="IPR036789">
    <property type="entry name" value="Ribosomal_uL6-like_a/b-dom_sf"/>
</dbReference>
<dbReference type="InterPro" id="IPR020040">
    <property type="entry name" value="Ribosomal_uL6_a/b-dom"/>
</dbReference>
<dbReference type="InterPro" id="IPR019906">
    <property type="entry name" value="Ribosomal_uL6_bac-type"/>
</dbReference>
<dbReference type="InterPro" id="IPR002358">
    <property type="entry name" value="Ribosomal_uL6_CS"/>
</dbReference>
<dbReference type="NCBIfam" id="TIGR03654">
    <property type="entry name" value="L6_bact"/>
    <property type="match status" value="1"/>
</dbReference>
<dbReference type="PANTHER" id="PTHR11655">
    <property type="entry name" value="60S/50S RIBOSOMAL PROTEIN L6/L9"/>
    <property type="match status" value="1"/>
</dbReference>
<dbReference type="PANTHER" id="PTHR11655:SF14">
    <property type="entry name" value="LARGE RIBOSOMAL SUBUNIT PROTEIN UL6M"/>
    <property type="match status" value="1"/>
</dbReference>
<dbReference type="Pfam" id="PF00347">
    <property type="entry name" value="Ribosomal_L6"/>
    <property type="match status" value="2"/>
</dbReference>
<dbReference type="PIRSF" id="PIRSF002162">
    <property type="entry name" value="Ribosomal_L6"/>
    <property type="match status" value="1"/>
</dbReference>
<dbReference type="PRINTS" id="PR00059">
    <property type="entry name" value="RIBOSOMALL6"/>
</dbReference>
<dbReference type="SUPFAM" id="SSF56053">
    <property type="entry name" value="Ribosomal protein L6"/>
    <property type="match status" value="2"/>
</dbReference>
<dbReference type="PROSITE" id="PS00525">
    <property type="entry name" value="RIBOSOMAL_L6_1"/>
    <property type="match status" value="1"/>
</dbReference>
<reference key="1">
    <citation type="journal article" date="2009" name="J. Bacteriol.">
        <title>Complete genome sequence of Erythrobacter litoralis HTCC2594.</title>
        <authorList>
            <person name="Oh H.M."/>
            <person name="Giovannoni S.J."/>
            <person name="Ferriera S."/>
            <person name="Johnson J."/>
            <person name="Cho J.C."/>
        </authorList>
    </citation>
    <scope>NUCLEOTIDE SEQUENCE [LARGE SCALE GENOMIC DNA]</scope>
    <source>
        <strain>HTCC2594</strain>
    </source>
</reference>
<comment type="function">
    <text evidence="1">This protein binds to the 23S rRNA, and is important in its secondary structure. It is located near the subunit interface in the base of the L7/L12 stalk, and near the tRNA binding site of the peptidyltransferase center.</text>
</comment>
<comment type="subunit">
    <text evidence="1">Part of the 50S ribosomal subunit.</text>
</comment>
<comment type="similarity">
    <text evidence="1">Belongs to the universal ribosomal protein uL6 family.</text>
</comment>
<keyword id="KW-1185">Reference proteome</keyword>
<keyword id="KW-0687">Ribonucleoprotein</keyword>
<keyword id="KW-0689">Ribosomal protein</keyword>
<keyword id="KW-0694">RNA-binding</keyword>
<keyword id="KW-0699">rRNA-binding</keyword>
<feature type="chain" id="PRO_1000055229" description="Large ribosomal subunit protein uL6">
    <location>
        <begin position="1"/>
        <end position="177"/>
    </location>
</feature>
<name>RL6_ERYLH</name>
<organism>
    <name type="scientific">Erythrobacter litoralis (strain HTCC2594)</name>
    <dbReference type="NCBI Taxonomy" id="314225"/>
    <lineage>
        <taxon>Bacteria</taxon>
        <taxon>Pseudomonadati</taxon>
        <taxon>Pseudomonadota</taxon>
        <taxon>Alphaproteobacteria</taxon>
        <taxon>Sphingomonadales</taxon>
        <taxon>Erythrobacteraceae</taxon>
        <taxon>Erythrobacter/Porphyrobacter group</taxon>
        <taxon>Erythrobacter</taxon>
    </lineage>
</organism>
<protein>
    <recommendedName>
        <fullName evidence="1">Large ribosomal subunit protein uL6</fullName>
    </recommendedName>
    <alternativeName>
        <fullName evidence="2">50S ribosomal protein L6</fullName>
    </alternativeName>
</protein>